<reference key="1">
    <citation type="journal article" date="2004" name="Proc. Natl. Acad. Sci. U.S.A.">
        <title>Genome sequence of the enterobacterial phytopathogen Erwinia carotovora subsp. atroseptica and characterization of virulence factors.</title>
        <authorList>
            <person name="Bell K.S."/>
            <person name="Sebaihia M."/>
            <person name="Pritchard L."/>
            <person name="Holden M.T.G."/>
            <person name="Hyman L.J."/>
            <person name="Holeva M.C."/>
            <person name="Thomson N.R."/>
            <person name="Bentley S.D."/>
            <person name="Churcher L.J.C."/>
            <person name="Mungall K."/>
            <person name="Atkin R."/>
            <person name="Bason N."/>
            <person name="Brooks K."/>
            <person name="Chillingworth T."/>
            <person name="Clark K."/>
            <person name="Doggett J."/>
            <person name="Fraser A."/>
            <person name="Hance Z."/>
            <person name="Hauser H."/>
            <person name="Jagels K."/>
            <person name="Moule S."/>
            <person name="Norbertczak H."/>
            <person name="Ormond D."/>
            <person name="Price C."/>
            <person name="Quail M.A."/>
            <person name="Sanders M."/>
            <person name="Walker D."/>
            <person name="Whitehead S."/>
            <person name="Salmond G.P.C."/>
            <person name="Birch P.R.J."/>
            <person name="Parkhill J."/>
            <person name="Toth I.K."/>
        </authorList>
    </citation>
    <scope>NUCLEOTIDE SEQUENCE [LARGE SCALE GENOMIC DNA]</scope>
    <source>
        <strain>SCRI 1043 / ATCC BAA-672</strain>
    </source>
</reference>
<organism>
    <name type="scientific">Pectobacterium atrosepticum (strain SCRI 1043 / ATCC BAA-672)</name>
    <name type="common">Erwinia carotovora subsp. atroseptica</name>
    <dbReference type="NCBI Taxonomy" id="218491"/>
    <lineage>
        <taxon>Bacteria</taxon>
        <taxon>Pseudomonadati</taxon>
        <taxon>Pseudomonadota</taxon>
        <taxon>Gammaproteobacteria</taxon>
        <taxon>Enterobacterales</taxon>
        <taxon>Pectobacteriaceae</taxon>
        <taxon>Pectobacterium</taxon>
    </lineage>
</organism>
<sequence>MITDILAMNLQVVFCGINPGLSTAHHGYHFANPNNRFWKVIHQAGFTERLLTPAEEQHLLDTGCGITMLVERPTVEATELGRDELLQGGNAIVEKMTRYQPRALAVLGKQAFSQAFGIKKVSWGRQERRIGETQVWVLPNPSGLNRATLESLVASYQELHQALQDNV</sequence>
<dbReference type="EC" id="3.2.2.28" evidence="1"/>
<dbReference type="EMBL" id="BX950851">
    <property type="protein sequence ID" value="CAG73593.1"/>
    <property type="molecule type" value="Genomic_DNA"/>
</dbReference>
<dbReference type="RefSeq" id="WP_011092295.1">
    <property type="nucleotide sequence ID" value="NC_004547.2"/>
</dbReference>
<dbReference type="SMR" id="Q6D9D7"/>
<dbReference type="STRING" id="218491.ECA0679"/>
<dbReference type="GeneID" id="57207413"/>
<dbReference type="KEGG" id="eca:ECA0679"/>
<dbReference type="eggNOG" id="COG3663">
    <property type="taxonomic scope" value="Bacteria"/>
</dbReference>
<dbReference type="HOGENOM" id="CLU_042829_3_1_6"/>
<dbReference type="OrthoDB" id="9799921at2"/>
<dbReference type="Proteomes" id="UP000007966">
    <property type="component" value="Chromosome"/>
</dbReference>
<dbReference type="GO" id="GO:0005737">
    <property type="term" value="C:cytoplasm"/>
    <property type="evidence" value="ECO:0007669"/>
    <property type="project" value="UniProtKB-SubCell"/>
</dbReference>
<dbReference type="GO" id="GO:0003677">
    <property type="term" value="F:DNA binding"/>
    <property type="evidence" value="ECO:0007669"/>
    <property type="project" value="UniProtKB-KW"/>
</dbReference>
<dbReference type="GO" id="GO:0008263">
    <property type="term" value="F:pyrimidine-specific mismatch base pair DNA N-glycosylase activity"/>
    <property type="evidence" value="ECO:0007669"/>
    <property type="project" value="UniProtKB-UniRule"/>
</dbReference>
<dbReference type="GO" id="GO:0004844">
    <property type="term" value="F:uracil DNA N-glycosylase activity"/>
    <property type="evidence" value="ECO:0007669"/>
    <property type="project" value="TreeGrafter"/>
</dbReference>
<dbReference type="GO" id="GO:0006285">
    <property type="term" value="P:base-excision repair, AP site formation"/>
    <property type="evidence" value="ECO:0007669"/>
    <property type="project" value="UniProtKB-UniRule"/>
</dbReference>
<dbReference type="CDD" id="cd10028">
    <property type="entry name" value="UDG-F2_TDG_MUG"/>
    <property type="match status" value="1"/>
</dbReference>
<dbReference type="Gene3D" id="3.40.470.10">
    <property type="entry name" value="Uracil-DNA glycosylase-like domain"/>
    <property type="match status" value="1"/>
</dbReference>
<dbReference type="HAMAP" id="MF_01956">
    <property type="entry name" value="MUG"/>
    <property type="match status" value="1"/>
</dbReference>
<dbReference type="InterPro" id="IPR015637">
    <property type="entry name" value="MUG/TDG"/>
</dbReference>
<dbReference type="InterPro" id="IPR023502">
    <property type="entry name" value="MUG_bact"/>
</dbReference>
<dbReference type="InterPro" id="IPR005122">
    <property type="entry name" value="Uracil-DNA_glycosylase-like"/>
</dbReference>
<dbReference type="InterPro" id="IPR036895">
    <property type="entry name" value="Uracil-DNA_glycosylase-like_sf"/>
</dbReference>
<dbReference type="NCBIfam" id="NF007570">
    <property type="entry name" value="PRK10201.1"/>
    <property type="match status" value="1"/>
</dbReference>
<dbReference type="PANTHER" id="PTHR12159">
    <property type="entry name" value="G/T AND G/U MISMATCH-SPECIFIC DNA GLYCOSYLASE"/>
    <property type="match status" value="1"/>
</dbReference>
<dbReference type="PANTHER" id="PTHR12159:SF9">
    <property type="entry name" value="G_T MISMATCH-SPECIFIC THYMINE DNA GLYCOSYLASE"/>
    <property type="match status" value="1"/>
</dbReference>
<dbReference type="Pfam" id="PF03167">
    <property type="entry name" value="UDG"/>
    <property type="match status" value="1"/>
</dbReference>
<dbReference type="SUPFAM" id="SSF52141">
    <property type="entry name" value="Uracil-DNA glycosylase-like"/>
    <property type="match status" value="1"/>
</dbReference>
<accession>Q6D9D7</accession>
<name>MUG_PECAS</name>
<gene>
    <name evidence="1" type="primary">mug</name>
    <name type="ordered locus">ECA0679</name>
</gene>
<proteinExistence type="inferred from homology"/>
<feature type="chain" id="PRO_0000238679" description="G/U mismatch-specific DNA glycosylase">
    <location>
        <begin position="1"/>
        <end position="167"/>
    </location>
</feature>
<comment type="function">
    <text evidence="1">Excises ethenocytosine and uracil, which can arise by alkylation or deamination of cytosine, respectively, from the corresponding mispairs with guanine in ds-DNA. It is capable of hydrolyzing the carbon-nitrogen bond between the sugar-phosphate backbone of the DNA and the mispaired base. The complementary strand guanine functions in substrate recognition. Required for DNA damage lesion repair in stationary-phase cells.</text>
</comment>
<comment type="catalytic activity">
    <reaction evidence="1">
        <text>Specifically hydrolyzes mismatched double-stranded DNA and polynucleotides, releasing free uracil.</text>
        <dbReference type="EC" id="3.2.2.28"/>
    </reaction>
</comment>
<comment type="subunit">
    <text evidence="1">Binds DNA as a monomer.</text>
</comment>
<comment type="subcellular location">
    <subcellularLocation>
        <location evidence="1">Cytoplasm</location>
    </subcellularLocation>
</comment>
<comment type="similarity">
    <text evidence="1">Belongs to the uracil-DNA glycosylase (UDG) superfamily. TDG/mug family.</text>
</comment>
<evidence type="ECO:0000255" key="1">
    <source>
        <dbReference type="HAMAP-Rule" id="MF_01956"/>
    </source>
</evidence>
<keyword id="KW-0963">Cytoplasm</keyword>
<keyword id="KW-0227">DNA damage</keyword>
<keyword id="KW-0228">DNA excision</keyword>
<keyword id="KW-0234">DNA repair</keyword>
<keyword id="KW-0238">DNA-binding</keyword>
<keyword id="KW-0378">Hydrolase</keyword>
<keyword id="KW-1185">Reference proteome</keyword>
<protein>
    <recommendedName>
        <fullName evidence="1">G/U mismatch-specific DNA glycosylase</fullName>
        <ecNumber evidence="1">3.2.2.28</ecNumber>
    </recommendedName>
    <alternativeName>
        <fullName evidence="1">Double-strand-specific uracil glycosylase</fullName>
    </alternativeName>
    <alternativeName>
        <fullName evidence="1">Mismatch-specific uracil DNA-glycosylase</fullName>
        <shortName evidence="1">MUG</shortName>
    </alternativeName>
</protein>